<protein>
    <recommendedName>
        <fullName evidence="1">GTP cyclohydrolase FolE2</fullName>
        <ecNumber evidence="1">3.5.4.16</ecNumber>
    </recommendedName>
</protein>
<name>GCH4_GEOSM</name>
<comment type="function">
    <text evidence="1">Converts GTP to 7,8-dihydroneopterin triphosphate.</text>
</comment>
<comment type="catalytic activity">
    <reaction evidence="1">
        <text>GTP + H2O = 7,8-dihydroneopterin 3'-triphosphate + formate + H(+)</text>
        <dbReference type="Rhea" id="RHEA:17473"/>
        <dbReference type="ChEBI" id="CHEBI:15377"/>
        <dbReference type="ChEBI" id="CHEBI:15378"/>
        <dbReference type="ChEBI" id="CHEBI:15740"/>
        <dbReference type="ChEBI" id="CHEBI:37565"/>
        <dbReference type="ChEBI" id="CHEBI:58462"/>
        <dbReference type="EC" id="3.5.4.16"/>
    </reaction>
</comment>
<comment type="pathway">
    <text evidence="1">Cofactor biosynthesis; 7,8-dihydroneopterin triphosphate biosynthesis; 7,8-dihydroneopterin triphosphate from GTP: step 1/1.</text>
</comment>
<comment type="similarity">
    <text evidence="1">Belongs to the GTP cyclohydrolase IV family.</text>
</comment>
<accession>C6E7E6</accession>
<gene>
    <name evidence="1" type="primary">folE2</name>
    <name type="ordered locus">GM21_3787</name>
</gene>
<keyword id="KW-0378">Hydrolase</keyword>
<evidence type="ECO:0000255" key="1">
    <source>
        <dbReference type="HAMAP-Rule" id="MF_01527"/>
    </source>
</evidence>
<sequence>MIKEYLKKPSLSDVQLTRDTRNIPIGKVGVKDISYPIVVMDKNKSFQNTIARINMYVDLPHHFKGTHMSRFVEILNEYREEIALDKLELILSTMKEKLGASNAHLEMEFPYFVEKTAPVSRAKSLMEYTCTFSASLSDRFDFVLGIKVPVTSLCPCSKELSSYGAHNQRSIMTVQVRYSEFIWIEDLIDIIEECGSSPVYSLLKREDEKFVTERAYENPRFVEDMVREATVRLLNMQNISWFSVEAENFESIHKHSAYAAIERSRES</sequence>
<dbReference type="EC" id="3.5.4.16" evidence="1"/>
<dbReference type="EMBL" id="CP001661">
    <property type="protein sequence ID" value="ACT19806.1"/>
    <property type="molecule type" value="Genomic_DNA"/>
</dbReference>
<dbReference type="SMR" id="C6E7E6"/>
<dbReference type="STRING" id="443144.GM21_3787"/>
<dbReference type="KEGG" id="gem:GM21_3787"/>
<dbReference type="eggNOG" id="COG1469">
    <property type="taxonomic scope" value="Bacteria"/>
</dbReference>
<dbReference type="HOGENOM" id="CLU_062816_1_1_7"/>
<dbReference type="UniPathway" id="UPA00848">
    <property type="reaction ID" value="UER00151"/>
</dbReference>
<dbReference type="GO" id="GO:0003934">
    <property type="term" value="F:GTP cyclohydrolase I activity"/>
    <property type="evidence" value="ECO:0007669"/>
    <property type="project" value="UniProtKB-UniRule"/>
</dbReference>
<dbReference type="GO" id="GO:0046654">
    <property type="term" value="P:tetrahydrofolate biosynthetic process"/>
    <property type="evidence" value="ECO:0007669"/>
    <property type="project" value="UniProtKB-UniRule"/>
</dbReference>
<dbReference type="Gene3D" id="3.10.270.10">
    <property type="entry name" value="Urate Oxidase"/>
    <property type="match status" value="1"/>
</dbReference>
<dbReference type="HAMAP" id="MF_01527_B">
    <property type="entry name" value="GTP_cyclohydrol_B"/>
    <property type="match status" value="1"/>
</dbReference>
<dbReference type="InterPro" id="IPR022838">
    <property type="entry name" value="GTP_cyclohydrolase_FolE2"/>
</dbReference>
<dbReference type="InterPro" id="IPR003801">
    <property type="entry name" value="GTP_cyclohydrolase_FolE2/MptA"/>
</dbReference>
<dbReference type="NCBIfam" id="NF010200">
    <property type="entry name" value="PRK13674.1-1"/>
    <property type="match status" value="1"/>
</dbReference>
<dbReference type="PANTHER" id="PTHR36445">
    <property type="entry name" value="GTP CYCLOHYDROLASE MPTA"/>
    <property type="match status" value="1"/>
</dbReference>
<dbReference type="PANTHER" id="PTHR36445:SF1">
    <property type="entry name" value="GTP CYCLOHYDROLASE MPTA"/>
    <property type="match status" value="1"/>
</dbReference>
<dbReference type="Pfam" id="PF02649">
    <property type="entry name" value="GCHY-1"/>
    <property type="match status" value="1"/>
</dbReference>
<organism>
    <name type="scientific">Geobacter sp. (strain M21)</name>
    <dbReference type="NCBI Taxonomy" id="443144"/>
    <lineage>
        <taxon>Bacteria</taxon>
        <taxon>Pseudomonadati</taxon>
        <taxon>Thermodesulfobacteriota</taxon>
        <taxon>Desulfuromonadia</taxon>
        <taxon>Geobacterales</taxon>
        <taxon>Geobacteraceae</taxon>
        <taxon>Geobacter</taxon>
    </lineage>
</organism>
<reference key="1">
    <citation type="submission" date="2009-07" db="EMBL/GenBank/DDBJ databases">
        <title>Complete sequence of Geobacter sp. M21.</title>
        <authorList>
            <consortium name="US DOE Joint Genome Institute"/>
            <person name="Lucas S."/>
            <person name="Copeland A."/>
            <person name="Lapidus A."/>
            <person name="Glavina del Rio T."/>
            <person name="Dalin E."/>
            <person name="Tice H."/>
            <person name="Bruce D."/>
            <person name="Goodwin L."/>
            <person name="Pitluck S."/>
            <person name="Saunders E."/>
            <person name="Brettin T."/>
            <person name="Detter J.C."/>
            <person name="Han C."/>
            <person name="Larimer F."/>
            <person name="Land M."/>
            <person name="Hauser L."/>
            <person name="Kyrpides N."/>
            <person name="Ovchinnikova G."/>
            <person name="Lovley D."/>
        </authorList>
    </citation>
    <scope>NUCLEOTIDE SEQUENCE [LARGE SCALE GENOMIC DNA]</scope>
    <source>
        <strain>M21</strain>
    </source>
</reference>
<proteinExistence type="inferred from homology"/>
<feature type="chain" id="PRO_1000215391" description="GTP cyclohydrolase FolE2">
    <location>
        <begin position="1"/>
        <end position="267"/>
    </location>
</feature>
<feature type="site" description="May be catalytically important" evidence="1">
    <location>
        <position position="154"/>
    </location>
</feature>